<reference key="1">
    <citation type="journal article" date="2008" name="J. Bacteriol.">
        <title>Insights into the environmental resistance gene pool from the genome sequence of the multidrug-resistant environmental isolate Escherichia coli SMS-3-5.</title>
        <authorList>
            <person name="Fricke W.F."/>
            <person name="Wright M.S."/>
            <person name="Lindell A.H."/>
            <person name="Harkins D.M."/>
            <person name="Baker-Austin C."/>
            <person name="Ravel J."/>
            <person name="Stepanauskas R."/>
        </authorList>
    </citation>
    <scope>NUCLEOTIDE SEQUENCE [LARGE SCALE GENOMIC DNA]</scope>
    <source>
        <strain>SMS-3-5 / SECEC</strain>
    </source>
</reference>
<comment type="function">
    <text evidence="1">Catalyzes the catabolism of the allantoin degradation intermediate (S)-ureidoglycolate, generating urea and glyoxylate. Involved in the anaerobic utilization of allantoin as sole nitrogen source. Reinforces the induction of genes involved in the degradation of allantoin and glyoxylate by producing glyoxylate.</text>
</comment>
<comment type="catalytic activity">
    <reaction evidence="1">
        <text>(S)-ureidoglycolate = urea + glyoxylate</text>
        <dbReference type="Rhea" id="RHEA:11304"/>
        <dbReference type="ChEBI" id="CHEBI:16199"/>
        <dbReference type="ChEBI" id="CHEBI:36655"/>
        <dbReference type="ChEBI" id="CHEBI:57296"/>
        <dbReference type="EC" id="4.3.2.3"/>
    </reaction>
</comment>
<comment type="cofactor">
    <cofactor evidence="1">
        <name>Ni(2+)</name>
        <dbReference type="ChEBI" id="CHEBI:49786"/>
    </cofactor>
</comment>
<comment type="pathway">
    <text evidence="1">Nitrogen metabolism; (S)-allantoin degradation.</text>
</comment>
<comment type="subunit">
    <text evidence="1">Homodimer.</text>
</comment>
<comment type="similarity">
    <text evidence="1">Belongs to the ureidoglycolate lyase family.</text>
</comment>
<proteinExistence type="inferred from homology"/>
<protein>
    <recommendedName>
        <fullName evidence="1">Ureidoglycolate lyase</fullName>
        <ecNumber evidence="1">4.3.2.3</ecNumber>
    </recommendedName>
    <alternativeName>
        <fullName evidence="1">Ureidoglycolatase</fullName>
    </alternativeName>
</protein>
<organism>
    <name type="scientific">Escherichia coli (strain SMS-3-5 / SECEC)</name>
    <dbReference type="NCBI Taxonomy" id="439855"/>
    <lineage>
        <taxon>Bacteria</taxon>
        <taxon>Pseudomonadati</taxon>
        <taxon>Pseudomonadota</taxon>
        <taxon>Gammaproteobacteria</taxon>
        <taxon>Enterobacterales</taxon>
        <taxon>Enterobacteriaceae</taxon>
        <taxon>Escherichia</taxon>
    </lineage>
</organism>
<keyword id="KW-0456">Lyase</keyword>
<keyword id="KW-0659">Purine metabolism</keyword>
<evidence type="ECO:0000255" key="1">
    <source>
        <dbReference type="HAMAP-Rule" id="MF_00616"/>
    </source>
</evidence>
<dbReference type="EC" id="4.3.2.3" evidence="1"/>
<dbReference type="EMBL" id="CP000970">
    <property type="protein sequence ID" value="ACB18201.1"/>
    <property type="molecule type" value="Genomic_DNA"/>
</dbReference>
<dbReference type="RefSeq" id="WP_000776393.1">
    <property type="nucleotide sequence ID" value="NC_010498.1"/>
</dbReference>
<dbReference type="SMR" id="B1LKC4"/>
<dbReference type="KEGG" id="ecm:EcSMS35_0548"/>
<dbReference type="HOGENOM" id="CLU_070848_1_1_6"/>
<dbReference type="UniPathway" id="UPA00395"/>
<dbReference type="Proteomes" id="UP000007011">
    <property type="component" value="Chromosome"/>
</dbReference>
<dbReference type="GO" id="GO:0004848">
    <property type="term" value="F:ureidoglycolate hydrolase activity"/>
    <property type="evidence" value="ECO:0007669"/>
    <property type="project" value="InterPro"/>
</dbReference>
<dbReference type="GO" id="GO:0050385">
    <property type="term" value="F:ureidoglycolate lyase activity"/>
    <property type="evidence" value="ECO:0007669"/>
    <property type="project" value="UniProtKB-UniRule"/>
</dbReference>
<dbReference type="GO" id="GO:0000256">
    <property type="term" value="P:allantoin catabolic process"/>
    <property type="evidence" value="ECO:0007669"/>
    <property type="project" value="UniProtKB-UniRule"/>
</dbReference>
<dbReference type="GO" id="GO:0006145">
    <property type="term" value="P:purine nucleobase catabolic process"/>
    <property type="evidence" value="ECO:0007669"/>
    <property type="project" value="UniProtKB-UniRule"/>
</dbReference>
<dbReference type="CDD" id="cd20298">
    <property type="entry name" value="cupin_UAH"/>
    <property type="match status" value="1"/>
</dbReference>
<dbReference type="FunFam" id="2.60.120.480:FF:000001">
    <property type="entry name" value="Ureidoglycolate lyase"/>
    <property type="match status" value="1"/>
</dbReference>
<dbReference type="Gene3D" id="2.60.120.480">
    <property type="entry name" value="Ureidoglycolate hydrolase"/>
    <property type="match status" value="1"/>
</dbReference>
<dbReference type="HAMAP" id="MF_00616">
    <property type="entry name" value="Ureidogly_lyase"/>
    <property type="match status" value="1"/>
</dbReference>
<dbReference type="InterPro" id="IPR011051">
    <property type="entry name" value="RmlC_Cupin_sf"/>
</dbReference>
<dbReference type="InterPro" id="IPR047233">
    <property type="entry name" value="UAH_cupin"/>
</dbReference>
<dbReference type="InterPro" id="IPR007247">
    <property type="entry name" value="Ureidogly_lyase"/>
</dbReference>
<dbReference type="InterPro" id="IPR023525">
    <property type="entry name" value="Ureidogly_lyase_bac"/>
</dbReference>
<dbReference type="InterPro" id="IPR024060">
    <property type="entry name" value="Ureidoglycolate_lyase_dom_sf"/>
</dbReference>
<dbReference type="NCBIfam" id="NF002948">
    <property type="entry name" value="PRK03606.1-1"/>
    <property type="match status" value="1"/>
</dbReference>
<dbReference type="NCBIfam" id="NF009932">
    <property type="entry name" value="PRK13395.1"/>
    <property type="match status" value="1"/>
</dbReference>
<dbReference type="PANTHER" id="PTHR21221">
    <property type="entry name" value="UREIDOGLYCOLATE HYDROLASE"/>
    <property type="match status" value="1"/>
</dbReference>
<dbReference type="PANTHER" id="PTHR21221:SF1">
    <property type="entry name" value="UREIDOGLYCOLATE LYASE"/>
    <property type="match status" value="1"/>
</dbReference>
<dbReference type="Pfam" id="PF04115">
    <property type="entry name" value="Ureidogly_lyase"/>
    <property type="match status" value="1"/>
</dbReference>
<dbReference type="PIRSF" id="PIRSF017306">
    <property type="entry name" value="Ureidogly_hydro"/>
    <property type="match status" value="1"/>
</dbReference>
<dbReference type="SUPFAM" id="SSF51182">
    <property type="entry name" value="RmlC-like cupins"/>
    <property type="match status" value="1"/>
</dbReference>
<gene>
    <name evidence="1" type="primary">allA</name>
    <name type="ordered locus">EcSMS35_0548</name>
</gene>
<name>ALLA_ECOSM</name>
<accession>B1LKC4</accession>
<feature type="chain" id="PRO_1000130417" description="Ureidoglycolate lyase">
    <location>
        <begin position="1"/>
        <end position="160"/>
    </location>
</feature>
<sequence>MKLQVLPLSQEAFSAYGDVIETQQRDFFHINNGLVERYHDLALVEILEQDRTLISINRAQPANLPLTLHELERHPLGTQAFIPMKGEVFVVVVALGDDKPDLSTLRAFITNGEQGVNYHRNVWHHPLFAWQRVTDFLTIDRGGSDNCDVESIPEQELCFA</sequence>